<keyword id="KW-0067">ATP-binding</keyword>
<keyword id="KW-0997">Cell inner membrane</keyword>
<keyword id="KW-1003">Cell membrane</keyword>
<keyword id="KW-0472">Membrane</keyword>
<keyword id="KW-0547">Nucleotide-binding</keyword>
<keyword id="KW-1185">Reference proteome</keyword>
<keyword id="KW-0764">Sulfate transport</keyword>
<keyword id="KW-1278">Translocase</keyword>
<keyword id="KW-0813">Transport</keyword>
<protein>
    <recommendedName>
        <fullName evidence="1">Sulfate/thiosulfate import ATP-binding protein CysA</fullName>
        <ecNumber evidence="1">7.3.2.3</ecNumber>
    </recommendedName>
    <alternativeName>
        <fullName evidence="1">Sulfate-transporting ATPase</fullName>
    </alternativeName>
</protein>
<name>CYSA_VIBCH</name>
<accession>Q9KUI0</accession>
<dbReference type="EC" id="7.3.2.3" evidence="1"/>
<dbReference type="EMBL" id="AE003852">
    <property type="protein sequence ID" value="AAF93709.1"/>
    <property type="molecule type" value="Genomic_DNA"/>
</dbReference>
<dbReference type="PIR" id="C82310">
    <property type="entry name" value="C82310"/>
</dbReference>
<dbReference type="RefSeq" id="NP_230192.1">
    <property type="nucleotide sequence ID" value="NC_002505.1"/>
</dbReference>
<dbReference type="RefSeq" id="WP_000027776.1">
    <property type="nucleotide sequence ID" value="NZ_LT906614.1"/>
</dbReference>
<dbReference type="SMR" id="Q9KUI0"/>
<dbReference type="STRING" id="243277.VC_0541"/>
<dbReference type="DNASU" id="2615210"/>
<dbReference type="EnsemblBacteria" id="AAF93709">
    <property type="protein sequence ID" value="AAF93709"/>
    <property type="gene ID" value="VC_0541"/>
</dbReference>
<dbReference type="KEGG" id="vch:VC_0541"/>
<dbReference type="PATRIC" id="fig|243277.26.peg.517"/>
<dbReference type="eggNOG" id="COG1118">
    <property type="taxonomic scope" value="Bacteria"/>
</dbReference>
<dbReference type="HOGENOM" id="CLU_000604_1_1_6"/>
<dbReference type="Proteomes" id="UP000000584">
    <property type="component" value="Chromosome 1"/>
</dbReference>
<dbReference type="GO" id="GO:0043190">
    <property type="term" value="C:ATP-binding cassette (ABC) transporter complex"/>
    <property type="evidence" value="ECO:0007669"/>
    <property type="project" value="InterPro"/>
</dbReference>
<dbReference type="GO" id="GO:0015419">
    <property type="term" value="F:ABC-type sulfate transporter activity"/>
    <property type="evidence" value="ECO:0007669"/>
    <property type="project" value="InterPro"/>
</dbReference>
<dbReference type="GO" id="GO:0102025">
    <property type="term" value="F:ABC-type thiosulfate transporter activity"/>
    <property type="evidence" value="ECO:0007669"/>
    <property type="project" value="RHEA"/>
</dbReference>
<dbReference type="GO" id="GO:0005524">
    <property type="term" value="F:ATP binding"/>
    <property type="evidence" value="ECO:0007669"/>
    <property type="project" value="UniProtKB-KW"/>
</dbReference>
<dbReference type="GO" id="GO:0016887">
    <property type="term" value="F:ATP hydrolysis activity"/>
    <property type="evidence" value="ECO:0007669"/>
    <property type="project" value="InterPro"/>
</dbReference>
<dbReference type="GO" id="GO:1902358">
    <property type="term" value="P:sulfate transmembrane transport"/>
    <property type="evidence" value="ECO:0000318"/>
    <property type="project" value="GO_Central"/>
</dbReference>
<dbReference type="FunFam" id="3.40.50.300:FF:002493">
    <property type="entry name" value="Sulfate/thiosulfate import ATP-binding protein CysA"/>
    <property type="match status" value="1"/>
</dbReference>
<dbReference type="Gene3D" id="3.40.50.300">
    <property type="entry name" value="P-loop containing nucleotide triphosphate hydrolases"/>
    <property type="match status" value="1"/>
</dbReference>
<dbReference type="InterPro" id="IPR003593">
    <property type="entry name" value="AAA+_ATPase"/>
</dbReference>
<dbReference type="InterPro" id="IPR050093">
    <property type="entry name" value="ABC_SmlMolc_Importer"/>
</dbReference>
<dbReference type="InterPro" id="IPR003439">
    <property type="entry name" value="ABC_transporter-like_ATP-bd"/>
</dbReference>
<dbReference type="InterPro" id="IPR017871">
    <property type="entry name" value="ABC_transporter-like_CS"/>
</dbReference>
<dbReference type="InterPro" id="IPR008995">
    <property type="entry name" value="Mo/tungstate-bd_C_term_dom"/>
</dbReference>
<dbReference type="InterPro" id="IPR027417">
    <property type="entry name" value="P-loop_NTPase"/>
</dbReference>
<dbReference type="InterPro" id="IPR005666">
    <property type="entry name" value="Sulph_transpt1"/>
</dbReference>
<dbReference type="InterPro" id="IPR024765">
    <property type="entry name" value="TOBE-like"/>
</dbReference>
<dbReference type="NCBIfam" id="TIGR00968">
    <property type="entry name" value="3a0106s01"/>
    <property type="match status" value="1"/>
</dbReference>
<dbReference type="PANTHER" id="PTHR42781">
    <property type="entry name" value="SPERMIDINE/PUTRESCINE IMPORT ATP-BINDING PROTEIN POTA"/>
    <property type="match status" value="1"/>
</dbReference>
<dbReference type="PANTHER" id="PTHR42781:SF4">
    <property type="entry name" value="SPERMIDINE_PUTRESCINE IMPORT ATP-BINDING PROTEIN POTA"/>
    <property type="match status" value="1"/>
</dbReference>
<dbReference type="Pfam" id="PF00005">
    <property type="entry name" value="ABC_tran"/>
    <property type="match status" value="1"/>
</dbReference>
<dbReference type="Pfam" id="PF12857">
    <property type="entry name" value="TOBE_3"/>
    <property type="match status" value="1"/>
</dbReference>
<dbReference type="SMART" id="SM00382">
    <property type="entry name" value="AAA"/>
    <property type="match status" value="1"/>
</dbReference>
<dbReference type="SUPFAM" id="SSF50331">
    <property type="entry name" value="MOP-like"/>
    <property type="match status" value="1"/>
</dbReference>
<dbReference type="SUPFAM" id="SSF52540">
    <property type="entry name" value="P-loop containing nucleoside triphosphate hydrolases"/>
    <property type="match status" value="1"/>
</dbReference>
<dbReference type="PROSITE" id="PS00211">
    <property type="entry name" value="ABC_TRANSPORTER_1"/>
    <property type="match status" value="1"/>
</dbReference>
<dbReference type="PROSITE" id="PS50893">
    <property type="entry name" value="ABC_TRANSPORTER_2"/>
    <property type="match status" value="1"/>
</dbReference>
<dbReference type="PROSITE" id="PS51237">
    <property type="entry name" value="CYSA"/>
    <property type="match status" value="1"/>
</dbReference>
<feature type="chain" id="PRO_0000092298" description="Sulfate/thiosulfate import ATP-binding protein CysA">
    <location>
        <begin position="1"/>
        <end position="376"/>
    </location>
</feature>
<feature type="domain" description="ABC transporter" evidence="1">
    <location>
        <begin position="3"/>
        <end position="237"/>
    </location>
</feature>
<feature type="binding site" evidence="1">
    <location>
        <begin position="35"/>
        <end position="42"/>
    </location>
    <ligand>
        <name>ATP</name>
        <dbReference type="ChEBI" id="CHEBI:30616"/>
    </ligand>
</feature>
<reference key="1">
    <citation type="journal article" date="2000" name="Nature">
        <title>DNA sequence of both chromosomes of the cholera pathogen Vibrio cholerae.</title>
        <authorList>
            <person name="Heidelberg J.F."/>
            <person name="Eisen J.A."/>
            <person name="Nelson W.C."/>
            <person name="Clayton R.A."/>
            <person name="Gwinn M.L."/>
            <person name="Dodson R.J."/>
            <person name="Haft D.H."/>
            <person name="Hickey E.K."/>
            <person name="Peterson J.D."/>
            <person name="Umayam L.A."/>
            <person name="Gill S.R."/>
            <person name="Nelson K.E."/>
            <person name="Read T.D."/>
            <person name="Tettelin H."/>
            <person name="Richardson D.L."/>
            <person name="Ermolaeva M.D."/>
            <person name="Vamathevan J.J."/>
            <person name="Bass S."/>
            <person name="Qin H."/>
            <person name="Dragoi I."/>
            <person name="Sellers P."/>
            <person name="McDonald L.A."/>
            <person name="Utterback T.R."/>
            <person name="Fleischmann R.D."/>
            <person name="Nierman W.C."/>
            <person name="White O."/>
            <person name="Salzberg S.L."/>
            <person name="Smith H.O."/>
            <person name="Colwell R.R."/>
            <person name="Mekalanos J.J."/>
            <person name="Venter J.C."/>
            <person name="Fraser C.M."/>
        </authorList>
    </citation>
    <scope>NUCLEOTIDE SEQUENCE [LARGE SCALE GENOMIC DNA]</scope>
    <source>
        <strain>ATCC 39315 / El Tor Inaba N16961</strain>
    </source>
</reference>
<evidence type="ECO:0000255" key="1">
    <source>
        <dbReference type="HAMAP-Rule" id="MF_01701"/>
    </source>
</evidence>
<comment type="function">
    <text evidence="1">Part of the ABC transporter complex CysAWTP involved in sulfate/thiosulfate import. Responsible for energy coupling to the transport system.</text>
</comment>
<comment type="catalytic activity">
    <reaction evidence="1">
        <text>sulfate(out) + ATP + H2O = sulfate(in) + ADP + phosphate + H(+)</text>
        <dbReference type="Rhea" id="RHEA:10192"/>
        <dbReference type="ChEBI" id="CHEBI:15377"/>
        <dbReference type="ChEBI" id="CHEBI:15378"/>
        <dbReference type="ChEBI" id="CHEBI:16189"/>
        <dbReference type="ChEBI" id="CHEBI:30616"/>
        <dbReference type="ChEBI" id="CHEBI:43474"/>
        <dbReference type="ChEBI" id="CHEBI:456216"/>
        <dbReference type="EC" id="7.3.2.3"/>
    </reaction>
</comment>
<comment type="catalytic activity">
    <reaction evidence="1">
        <text>thiosulfate(out) + ATP + H2O = thiosulfate(in) + ADP + phosphate + H(+)</text>
        <dbReference type="Rhea" id="RHEA:29871"/>
        <dbReference type="ChEBI" id="CHEBI:15377"/>
        <dbReference type="ChEBI" id="CHEBI:15378"/>
        <dbReference type="ChEBI" id="CHEBI:30616"/>
        <dbReference type="ChEBI" id="CHEBI:33542"/>
        <dbReference type="ChEBI" id="CHEBI:43474"/>
        <dbReference type="ChEBI" id="CHEBI:456216"/>
        <dbReference type="EC" id="7.3.2.3"/>
    </reaction>
</comment>
<comment type="subunit">
    <text evidence="1">The complex is composed of two ATP-binding proteins (CysA), two transmembrane proteins (CysT and CysW) and a solute-binding protein (CysP).</text>
</comment>
<comment type="subcellular location">
    <subcellularLocation>
        <location evidence="1">Cell inner membrane</location>
        <topology evidence="1">Peripheral membrane protein</topology>
    </subcellularLocation>
</comment>
<comment type="similarity">
    <text evidence="1">Belongs to the ABC transporter superfamily. Sulfate/tungstate importer (TC 3.A.1.6) family.</text>
</comment>
<proteinExistence type="inferred from homology"/>
<sequence>MSIRLDNISKHFGQFQALAPLSLKIEDGEMIGLLGPSGSGKTTLLRIIAGLEGADSGTIHFRNRDVTNVHVRDRRVGFVFQNYALFRHMTVADNVAFGLQVMERAQRPNPAEIQKRVKQLLEIVQLGHLAHRYPEQLSGGQKQRIALARALATQPEVLLLDEPFGALDAKVRKELRRWLRSLHDELGFTSVFVTHDQDEALELSDRVVVMSNGRIEQIDSPVELYAQPNSRFVFDFFGNVNQFAGEWQNGQWVNGSAFIQPPESDATRQSGLLYVRSHELALSDKENSQASLPFEVVSINPVGAEVRVELASVGWQSQELWEAKLSHRSLSEKRLSRGDQVFATPQVGYFFASEGQSSPSVLRWPFLAPGSLMFEI</sequence>
<gene>
    <name evidence="1" type="primary">cysA</name>
    <name type="ordered locus">VC_0541</name>
</gene>
<organism>
    <name type="scientific">Vibrio cholerae serotype O1 (strain ATCC 39315 / El Tor Inaba N16961)</name>
    <dbReference type="NCBI Taxonomy" id="243277"/>
    <lineage>
        <taxon>Bacteria</taxon>
        <taxon>Pseudomonadati</taxon>
        <taxon>Pseudomonadota</taxon>
        <taxon>Gammaproteobacteria</taxon>
        <taxon>Vibrionales</taxon>
        <taxon>Vibrionaceae</taxon>
        <taxon>Vibrio</taxon>
    </lineage>
</organism>